<feature type="chain" id="PRO_0000424625" description="Disintegrin-like halysetin">
    <location>
        <begin position="1"/>
        <end position="212"/>
    </location>
</feature>
<feature type="domain" description="Disintegrin" evidence="1">
    <location>
        <begin position="4"/>
        <end position="90"/>
    </location>
</feature>
<feature type="short sequence motif" description="D/ECD-tripeptide">
    <location>
        <begin position="68"/>
        <end position="70"/>
    </location>
</feature>
<feature type="disulfide bond" evidence="1">
    <location>
        <begin position="7"/>
        <end position="26"/>
    </location>
</feature>
<feature type="disulfide bond" evidence="1">
    <location>
        <begin position="18"/>
        <end position="36"/>
    </location>
</feature>
<feature type="disulfide bond" evidence="1">
    <location>
        <begin position="62"/>
        <end position="82"/>
    </location>
</feature>
<feature type="disulfide bond" evidence="1">
    <location>
        <begin position="69"/>
        <end position="94"/>
    </location>
</feature>
<feature type="disulfide bond" evidence="1">
    <location>
        <begin position="101"/>
        <end position="106"/>
    </location>
</feature>
<feature type="disulfide bond" evidence="1">
    <location>
        <begin position="113"/>
        <end position="128"/>
    </location>
</feature>
<feature type="disulfide bond" evidence="1">
    <location>
        <begin position="151"/>
        <end position="158"/>
    </location>
</feature>
<feature type="disulfide bond" evidence="1">
    <location>
        <begin position="163"/>
        <end position="174"/>
    </location>
</feature>
<feature type="disulfide bond" evidence="1">
    <location>
        <begin position="200"/>
        <end position="205"/>
    </location>
</feature>
<name>VM3H_GLOHA</name>
<evidence type="ECO:0000255" key="1">
    <source>
        <dbReference type="PROSITE-ProRule" id="PRU00068"/>
    </source>
</evidence>
<evidence type="ECO:0000269" key="2">
    <source>
    </source>
</evidence>
<evidence type="ECO:0000305" key="3"/>
<evidence type="ECO:0000305" key="4">
    <source>
    </source>
</evidence>
<proteinExistence type="evidence at protein level"/>
<reference key="1">
    <citation type="journal article" date="2000" name="Biochem. Biophys. Res. Commun.">
        <title>Purification, characterization, and cDNA sequence of halysetin, a disintegrin-like/cysteine-rich protein from the venom of Agkistrodon halys Pallas.</title>
        <authorList>
            <person name="Liu J.W."/>
            <person name="Du X.Y."/>
            <person name="Liu P."/>
            <person name="Chen X."/>
            <person name="Xu J.M."/>
            <person name="Wu X.F."/>
            <person name="Zhou Y.C."/>
        </authorList>
    </citation>
    <scope>NUCLEOTIDE SEQUENCE [MRNA]</scope>
    <scope>PROTEIN SEQUENCE OF 1-10 AND 207-212</scope>
    <scope>FUNCTION</scope>
    <scope>MASS SPECTROMETRY</scope>
    <source>
        <tissue>Venom gland</tissue>
    </source>
</reference>
<sequence>IVSPPVCGNELLEVGEECDCGTPENCQNECCDAATCKLKSGSQCGHGDCCEQCKFSKSGTECRESMSECDPAEHCTGQSSECPADVFHKNGQPCLDNYGYCYNGNCPIMYHQCYALWGADVYEAEDSCFESNTKGNYYGYCRKENGIKIPCAPEDVKCGRLYCKDNSPGQNNPCKMFYSNEDEHKGMVLPGTKCGDGKVCSNGHCVDVATAY</sequence>
<organism>
    <name type="scientific">Gloydius halys</name>
    <name type="common">Chinese water mocassin</name>
    <name type="synonym">Agkistrodon halys</name>
    <dbReference type="NCBI Taxonomy" id="8714"/>
    <lineage>
        <taxon>Eukaryota</taxon>
        <taxon>Metazoa</taxon>
        <taxon>Chordata</taxon>
        <taxon>Craniata</taxon>
        <taxon>Vertebrata</taxon>
        <taxon>Euteleostomi</taxon>
        <taxon>Lepidosauria</taxon>
        <taxon>Squamata</taxon>
        <taxon>Bifurcata</taxon>
        <taxon>Unidentata</taxon>
        <taxon>Episquamata</taxon>
        <taxon>Toxicofera</taxon>
        <taxon>Serpentes</taxon>
        <taxon>Colubroidea</taxon>
        <taxon>Viperidae</taxon>
        <taxon>Crotalinae</taxon>
        <taxon>Gloydius</taxon>
    </lineage>
</organism>
<dbReference type="EMBL" id="AF284093">
    <property type="protein sequence ID" value="AAK82974.1"/>
    <property type="molecule type" value="mRNA"/>
</dbReference>
<dbReference type="SMR" id="Q90Y44"/>
<dbReference type="MEROPS" id="M12.022"/>
<dbReference type="GO" id="GO:0005576">
    <property type="term" value="C:extracellular region"/>
    <property type="evidence" value="ECO:0007669"/>
    <property type="project" value="UniProtKB-SubCell"/>
</dbReference>
<dbReference type="GO" id="GO:0005886">
    <property type="term" value="C:plasma membrane"/>
    <property type="evidence" value="ECO:0007669"/>
    <property type="project" value="TreeGrafter"/>
</dbReference>
<dbReference type="GO" id="GO:0090729">
    <property type="term" value="F:toxin activity"/>
    <property type="evidence" value="ECO:0007669"/>
    <property type="project" value="UniProtKB-KW"/>
</dbReference>
<dbReference type="FunFam" id="4.10.70.10:FF:000001">
    <property type="entry name" value="Disintegrin and metalloproteinase domain-containing protein 22"/>
    <property type="match status" value="1"/>
</dbReference>
<dbReference type="Gene3D" id="3.40.1620.60">
    <property type="match status" value="1"/>
</dbReference>
<dbReference type="Gene3D" id="4.10.70.10">
    <property type="entry name" value="Disintegrin domain"/>
    <property type="match status" value="1"/>
</dbReference>
<dbReference type="InterPro" id="IPR006586">
    <property type="entry name" value="ADAM_Cys-rich"/>
</dbReference>
<dbReference type="InterPro" id="IPR018358">
    <property type="entry name" value="Disintegrin_CS"/>
</dbReference>
<dbReference type="InterPro" id="IPR001762">
    <property type="entry name" value="Disintegrin_dom"/>
</dbReference>
<dbReference type="InterPro" id="IPR036436">
    <property type="entry name" value="Disintegrin_dom_sf"/>
</dbReference>
<dbReference type="PANTHER" id="PTHR11905">
    <property type="entry name" value="ADAM A DISINTEGRIN AND METALLOPROTEASE DOMAIN"/>
    <property type="match status" value="1"/>
</dbReference>
<dbReference type="PANTHER" id="PTHR11905:SF32">
    <property type="entry name" value="DISINTEGRIN AND METALLOPROTEINASE DOMAIN-CONTAINING PROTEIN 28"/>
    <property type="match status" value="1"/>
</dbReference>
<dbReference type="Pfam" id="PF08516">
    <property type="entry name" value="ADAM_CR"/>
    <property type="match status" value="1"/>
</dbReference>
<dbReference type="Pfam" id="PF00200">
    <property type="entry name" value="Disintegrin"/>
    <property type="match status" value="1"/>
</dbReference>
<dbReference type="PRINTS" id="PR00289">
    <property type="entry name" value="DISINTEGRIN"/>
</dbReference>
<dbReference type="SMART" id="SM00608">
    <property type="entry name" value="ACR"/>
    <property type="match status" value="1"/>
</dbReference>
<dbReference type="SMART" id="SM00050">
    <property type="entry name" value="DISIN"/>
    <property type="match status" value="1"/>
</dbReference>
<dbReference type="SUPFAM" id="SSF57552">
    <property type="entry name" value="Blood coagulation inhibitor (disintegrin)"/>
    <property type="match status" value="1"/>
</dbReference>
<dbReference type="PROSITE" id="PS00427">
    <property type="entry name" value="DISINTEGRIN_1"/>
    <property type="match status" value="1"/>
</dbReference>
<dbReference type="PROSITE" id="PS50214">
    <property type="entry name" value="DISINTEGRIN_2"/>
    <property type="match status" value="1"/>
</dbReference>
<comment type="function">
    <text evidence="2">Inhibits human platelet aggregation stimulated by collagen with an IC(50) of 420 nM.</text>
</comment>
<comment type="subunit">
    <text>Monomer.</text>
</comment>
<comment type="subcellular location">
    <subcellularLocation>
        <location>Secreted</location>
    </subcellularLocation>
</comment>
<comment type="tissue specificity">
    <text>Expressed by the venom gland.</text>
</comment>
<comment type="mass spectrometry"/>
<comment type="miscellaneous">
    <text evidence="4">Negative results: does not inhibit platelet aggregation stimulated by ADP.</text>
</comment>
<comment type="miscellaneous">
    <text>The disintegrin domain belongs to the long disintegrin subfamily.</text>
</comment>
<comment type="similarity">
    <text evidence="3">Belongs to the venom metalloproteinase (M12B) family. P-III subfamily. P-IIIb sub-subfamily.</text>
</comment>
<comment type="caution">
    <text evidence="3">The complete sequence contains a signal peptide, a propeptide domain, and a proteinase domain at the N-terminus.</text>
</comment>
<accession>Q90Y44</accession>
<protein>
    <recommendedName>
        <fullName>Disintegrin-like halysetin</fullName>
    </recommendedName>
</protein>
<keyword id="KW-1217">Cell adhesion impairing toxin</keyword>
<keyword id="KW-0903">Direct protein sequencing</keyword>
<keyword id="KW-1015">Disulfide bond</keyword>
<keyword id="KW-1199">Hemostasis impairing toxin</keyword>
<keyword id="KW-1201">Platelet aggregation inhibiting toxin</keyword>
<keyword id="KW-0964">Secreted</keyword>
<keyword id="KW-0800">Toxin</keyword>